<dbReference type="EMBL" id="CP000444">
    <property type="protein sequence ID" value="ABI41213.1"/>
    <property type="molecule type" value="Genomic_DNA"/>
</dbReference>
<dbReference type="SMR" id="Q0I092"/>
<dbReference type="KEGG" id="shm:Shewmr7_0207"/>
<dbReference type="HOGENOM" id="CLU_139869_0_1_6"/>
<dbReference type="GO" id="GO:0005737">
    <property type="term" value="C:cytoplasm"/>
    <property type="evidence" value="ECO:0007669"/>
    <property type="project" value="UniProtKB-ARBA"/>
</dbReference>
<dbReference type="GO" id="GO:0015935">
    <property type="term" value="C:small ribosomal subunit"/>
    <property type="evidence" value="ECO:0007669"/>
    <property type="project" value="TreeGrafter"/>
</dbReference>
<dbReference type="GO" id="GO:0019843">
    <property type="term" value="F:rRNA binding"/>
    <property type="evidence" value="ECO:0007669"/>
    <property type="project" value="UniProtKB-UniRule"/>
</dbReference>
<dbReference type="GO" id="GO:0003735">
    <property type="term" value="F:structural constituent of ribosome"/>
    <property type="evidence" value="ECO:0007669"/>
    <property type="project" value="InterPro"/>
</dbReference>
<dbReference type="GO" id="GO:0006412">
    <property type="term" value="P:translation"/>
    <property type="evidence" value="ECO:0007669"/>
    <property type="project" value="UniProtKB-UniRule"/>
</dbReference>
<dbReference type="FunFam" id="1.10.287.1480:FF:000001">
    <property type="entry name" value="30S ribosomal protein S14"/>
    <property type="match status" value="1"/>
</dbReference>
<dbReference type="Gene3D" id="1.10.287.1480">
    <property type="match status" value="1"/>
</dbReference>
<dbReference type="HAMAP" id="MF_00537">
    <property type="entry name" value="Ribosomal_uS14_1"/>
    <property type="match status" value="1"/>
</dbReference>
<dbReference type="InterPro" id="IPR001209">
    <property type="entry name" value="Ribosomal_uS14"/>
</dbReference>
<dbReference type="InterPro" id="IPR023036">
    <property type="entry name" value="Ribosomal_uS14_bac/plastid"/>
</dbReference>
<dbReference type="InterPro" id="IPR018271">
    <property type="entry name" value="Ribosomal_uS14_CS"/>
</dbReference>
<dbReference type="NCBIfam" id="NF006477">
    <property type="entry name" value="PRK08881.1"/>
    <property type="match status" value="1"/>
</dbReference>
<dbReference type="PANTHER" id="PTHR19836">
    <property type="entry name" value="30S RIBOSOMAL PROTEIN S14"/>
    <property type="match status" value="1"/>
</dbReference>
<dbReference type="PANTHER" id="PTHR19836:SF19">
    <property type="entry name" value="SMALL RIBOSOMAL SUBUNIT PROTEIN US14M"/>
    <property type="match status" value="1"/>
</dbReference>
<dbReference type="Pfam" id="PF00253">
    <property type="entry name" value="Ribosomal_S14"/>
    <property type="match status" value="1"/>
</dbReference>
<dbReference type="SUPFAM" id="SSF57716">
    <property type="entry name" value="Glucocorticoid receptor-like (DNA-binding domain)"/>
    <property type="match status" value="1"/>
</dbReference>
<dbReference type="PROSITE" id="PS00527">
    <property type="entry name" value="RIBOSOMAL_S14"/>
    <property type="match status" value="1"/>
</dbReference>
<comment type="function">
    <text evidence="1">Binds 16S rRNA, required for the assembly of 30S particles and may also be responsible for determining the conformation of the 16S rRNA at the A site.</text>
</comment>
<comment type="subunit">
    <text evidence="1">Part of the 30S ribosomal subunit. Contacts proteins S3 and S10.</text>
</comment>
<comment type="similarity">
    <text evidence="1">Belongs to the universal ribosomal protein uS14 family.</text>
</comment>
<name>RS14_SHESR</name>
<feature type="chain" id="PRO_1000128584" description="Small ribosomal subunit protein uS14">
    <location>
        <begin position="1"/>
        <end position="101"/>
    </location>
</feature>
<reference key="1">
    <citation type="submission" date="2006-08" db="EMBL/GenBank/DDBJ databases">
        <title>Complete sequence of chromosome 1 of Shewanella sp. MR-7.</title>
        <authorList>
            <person name="Copeland A."/>
            <person name="Lucas S."/>
            <person name="Lapidus A."/>
            <person name="Barry K."/>
            <person name="Detter J.C."/>
            <person name="Glavina del Rio T."/>
            <person name="Hammon N."/>
            <person name="Israni S."/>
            <person name="Dalin E."/>
            <person name="Tice H."/>
            <person name="Pitluck S."/>
            <person name="Kiss H."/>
            <person name="Brettin T."/>
            <person name="Bruce D."/>
            <person name="Han C."/>
            <person name="Tapia R."/>
            <person name="Gilna P."/>
            <person name="Schmutz J."/>
            <person name="Larimer F."/>
            <person name="Land M."/>
            <person name="Hauser L."/>
            <person name="Kyrpides N."/>
            <person name="Mikhailova N."/>
            <person name="Nealson K."/>
            <person name="Konstantinidis K."/>
            <person name="Klappenbach J."/>
            <person name="Tiedje J."/>
            <person name="Richardson P."/>
        </authorList>
    </citation>
    <scope>NUCLEOTIDE SEQUENCE [LARGE SCALE GENOMIC DNA]</scope>
    <source>
        <strain>MR-7</strain>
    </source>
</reference>
<organism>
    <name type="scientific">Shewanella sp. (strain MR-7)</name>
    <dbReference type="NCBI Taxonomy" id="60481"/>
    <lineage>
        <taxon>Bacteria</taxon>
        <taxon>Pseudomonadati</taxon>
        <taxon>Pseudomonadota</taxon>
        <taxon>Gammaproteobacteria</taxon>
        <taxon>Alteromonadales</taxon>
        <taxon>Shewanellaceae</taxon>
        <taxon>Shewanella</taxon>
    </lineage>
</organism>
<accession>Q0I092</accession>
<sequence length="101" mass="11361">MAKTSMKAREAKRAQLVAKFAEKRAALKAIIANPASSDEDRWDAVLKLQALPRDSSASRQRNRCNQTGRPHGFLRKFGLSRIKLREATMRGEVPGLRKASW</sequence>
<protein>
    <recommendedName>
        <fullName evidence="1">Small ribosomal subunit protein uS14</fullName>
    </recommendedName>
    <alternativeName>
        <fullName evidence="2">30S ribosomal protein S14</fullName>
    </alternativeName>
</protein>
<proteinExistence type="inferred from homology"/>
<gene>
    <name evidence="1" type="primary">rpsN</name>
    <name type="ordered locus">Shewmr7_0207</name>
</gene>
<keyword id="KW-0687">Ribonucleoprotein</keyword>
<keyword id="KW-0689">Ribosomal protein</keyword>
<keyword id="KW-0694">RNA-binding</keyword>
<keyword id="KW-0699">rRNA-binding</keyword>
<evidence type="ECO:0000255" key="1">
    <source>
        <dbReference type="HAMAP-Rule" id="MF_00537"/>
    </source>
</evidence>
<evidence type="ECO:0000305" key="2"/>